<evidence type="ECO:0000250" key="1">
    <source>
        <dbReference type="UniProtKB" id="P01003"/>
    </source>
</evidence>
<evidence type="ECO:0000255" key="2"/>
<evidence type="ECO:0000255" key="3">
    <source>
        <dbReference type="PROSITE-ProRule" id="PRU00798"/>
    </source>
</evidence>
<evidence type="ECO:0000269" key="4">
    <source>
    </source>
</evidence>
<evidence type="ECO:0000269" key="5">
    <source>
    </source>
</evidence>
<evidence type="ECO:0000303" key="6">
    <source>
    </source>
</evidence>
<evidence type="ECO:0000303" key="7">
    <source>
    </source>
</evidence>
<evidence type="ECO:0000305" key="8"/>
<evidence type="ECO:0007829" key="9">
    <source>
        <dbReference type="PDB" id="2N71"/>
    </source>
</evidence>
<reference evidence="8" key="1">
    <citation type="journal article" date="2007" name="Biol. Chem.">
        <title>Characterization and comparative 3D modeling of CmPI-II, a novel 'non-classical' Kazal-type inhibitor from the marine snail Cenchritis muricatus (Mollusca).</title>
        <authorList>
            <person name="Gonzalez Y."/>
            <person name="Pons T."/>
            <person name="Gil J."/>
            <person name="Besada V."/>
            <person name="Alonso-del-Rivero M."/>
            <person name="Tanaka A.S."/>
            <person name="Araujo M.S."/>
            <person name="Chavez M.A."/>
        </authorList>
    </citation>
    <scope>PROTEIN SEQUENCE</scope>
    <scope>FUNCTION</scope>
</reference>
<reference evidence="8" key="2">
    <citation type="journal article" date="2007" name="Comp. Biochem. Physiol.">
        <title>Purification and partial characterization of human neutrophil elastase inhibitors from the marine snail Cenchritis muricatus (Mollusca).</title>
        <authorList>
            <person name="Gonzalez Y."/>
            <person name="Tanaka A.S."/>
            <person name="Hirata I.Y."/>
            <person name="del Rivero M.A."/>
            <person name="Oliva M.L.V."/>
            <person name="Araujo M.S."/>
            <person name="Chavez M.A."/>
        </authorList>
    </citation>
    <scope>PROTEIN SEQUENCE OF 1-20</scope>
    <scope>FUNCTION</scope>
    <scope>MASS SPECTROMETRY</scope>
</reference>
<name>IPK2_CENMR</name>
<feature type="chain" id="PRO_0000073200" description="Protease inhibitor 2">
    <location>
        <begin position="1"/>
        <end position="50"/>
    </location>
</feature>
<feature type="domain" description="Kazal-like" evidence="3">
    <location>
        <begin position="2"/>
        <end position="50"/>
    </location>
</feature>
<feature type="site" description="Reactive bond" evidence="3">
    <location>
        <begin position="11"/>
        <end position="12"/>
    </location>
</feature>
<feature type="glycosylation site" description="N-linked (GlcNAc...) asparagine" evidence="2">
    <location>
        <position position="30"/>
    </location>
</feature>
<feature type="glycosylation site" description="N-linked (GlcNAc...) asparagine" evidence="2">
    <location>
        <position position="41"/>
    </location>
</feature>
<feature type="disulfide bond" evidence="1 3">
    <location>
        <begin position="10"/>
        <end position="29"/>
    </location>
</feature>
<feature type="disulfide bond" evidence="1 3">
    <location>
        <begin position="18"/>
        <end position="50"/>
    </location>
</feature>
<feature type="strand" evidence="9">
    <location>
        <begin position="17"/>
        <end position="19"/>
    </location>
</feature>
<feature type="turn" evidence="9">
    <location>
        <begin position="20"/>
        <end position="22"/>
    </location>
</feature>
<feature type="strand" evidence="9">
    <location>
        <begin position="23"/>
        <end position="27"/>
    </location>
</feature>
<feature type="helix" evidence="9">
    <location>
        <begin position="28"/>
        <end position="37"/>
    </location>
</feature>
<feature type="strand" evidence="9">
    <location>
        <begin position="44"/>
        <end position="48"/>
    </location>
</feature>
<sequence>AEDCVGRKACTREWYPVCGSDGVTYSNPCNFSAQQEQCDPNITIAHMGEC</sequence>
<keyword id="KW-0002">3D-structure</keyword>
<keyword id="KW-0903">Direct protein sequencing</keyword>
<keyword id="KW-1015">Disulfide bond</keyword>
<keyword id="KW-0325">Glycoprotein</keyword>
<keyword id="KW-0646">Protease inhibitor</keyword>
<keyword id="KW-0722">Serine protease inhibitor</keyword>
<dbReference type="PDB" id="2N71">
    <property type="method" value="NMR"/>
    <property type="chains" value="A=1-50"/>
</dbReference>
<dbReference type="PDBsum" id="2N71"/>
<dbReference type="BMRB" id="P84755"/>
<dbReference type="SMR" id="P84755"/>
<dbReference type="MEROPS" id="I01.046"/>
<dbReference type="GO" id="GO:0004867">
    <property type="term" value="F:serine-type endopeptidase inhibitor activity"/>
    <property type="evidence" value="ECO:0007669"/>
    <property type="project" value="UniProtKB-KW"/>
</dbReference>
<dbReference type="CDD" id="cd00104">
    <property type="entry name" value="KAZAL_FS"/>
    <property type="match status" value="1"/>
</dbReference>
<dbReference type="Gene3D" id="3.30.60.30">
    <property type="match status" value="1"/>
</dbReference>
<dbReference type="InterPro" id="IPR002350">
    <property type="entry name" value="Kazal_dom"/>
</dbReference>
<dbReference type="InterPro" id="IPR036058">
    <property type="entry name" value="Kazal_dom_sf"/>
</dbReference>
<dbReference type="PANTHER" id="PTHR21312">
    <property type="entry name" value="SERINE PROTEASE INHIBITOR"/>
    <property type="match status" value="1"/>
</dbReference>
<dbReference type="PANTHER" id="PTHR21312:SF30">
    <property type="entry name" value="SERINE PROTEASE INHIBITOR KAZAL-TYPE 11-RELATED"/>
    <property type="match status" value="1"/>
</dbReference>
<dbReference type="Pfam" id="PF00050">
    <property type="entry name" value="Kazal_1"/>
    <property type="match status" value="1"/>
</dbReference>
<dbReference type="SMART" id="SM00280">
    <property type="entry name" value="KAZAL"/>
    <property type="match status" value="1"/>
</dbReference>
<dbReference type="SUPFAM" id="SSF100895">
    <property type="entry name" value="Kazal-type serine protease inhibitors"/>
    <property type="match status" value="1"/>
</dbReference>
<dbReference type="PROSITE" id="PS51465">
    <property type="entry name" value="KAZAL_2"/>
    <property type="match status" value="1"/>
</dbReference>
<protein>
    <recommendedName>
        <fullName evidence="6 7">Protease inhibitor 2</fullName>
    </recommendedName>
    <alternativeName>
        <fullName evidence="6 7">CmPI-II</fullName>
    </alternativeName>
    <alternativeName>
        <fullName evidence="6 7">Protease inhibitor-II</fullName>
    </alternativeName>
</protein>
<accession>P84755</accession>
<proteinExistence type="evidence at protein level"/>
<organism>
    <name type="scientific">Cenchritis muricatus</name>
    <name type="common">Beaded periwinkle</name>
    <dbReference type="NCBI Taxonomy" id="197001"/>
    <lineage>
        <taxon>Eukaryota</taxon>
        <taxon>Metazoa</taxon>
        <taxon>Spiralia</taxon>
        <taxon>Lophotrochozoa</taxon>
        <taxon>Mollusca</taxon>
        <taxon>Gastropoda</taxon>
        <taxon>Caenogastropoda</taxon>
        <taxon>Littorinimorpha</taxon>
        <taxon>Littorinoidea</taxon>
        <taxon>Littorinidae</taxon>
        <taxon>Cenchritis</taxon>
    </lineage>
</organism>
<comment type="function">
    <text evidence="4 5">Serine protease inhibitor. Strongly inhibits human neutrophil elastase and trypsin, also inhibits porcine pancreatic elastase and subtilisin A. Does not inhibit chymotrypsin, plasma kallikrein, pancreatic kallikrein, thrombin or papain.</text>
</comment>
<comment type="mass spectrometry"/>